<proteinExistence type="inferred from homology"/>
<protein>
    <recommendedName>
        <fullName evidence="1">ATP synthase gamma chain</fullName>
    </recommendedName>
    <alternativeName>
        <fullName evidence="1">ATP synthase F1 sector gamma subunit</fullName>
    </alternativeName>
    <alternativeName>
        <fullName evidence="1">F-ATPase gamma subunit</fullName>
    </alternativeName>
</protein>
<name>ATPG_JANSC</name>
<comment type="function">
    <text evidence="1">Produces ATP from ADP in the presence of a proton gradient across the membrane. The gamma chain is believed to be important in regulating ATPase activity and the flow of protons through the CF(0) complex.</text>
</comment>
<comment type="subunit">
    <text evidence="1">F-type ATPases have 2 components, CF(1) - the catalytic core - and CF(0) - the membrane proton channel. CF(1) has five subunits: alpha(3), beta(3), gamma(1), delta(1), epsilon(1). CF(0) has three main subunits: a, b and c.</text>
</comment>
<comment type="subcellular location">
    <subcellularLocation>
        <location evidence="1">Cell inner membrane</location>
        <topology evidence="1">Peripheral membrane protein</topology>
    </subcellularLocation>
</comment>
<comment type="similarity">
    <text evidence="1">Belongs to the ATPase gamma chain family.</text>
</comment>
<sequence>MPNLKDLKNRIASVKSTRKITKAMQMVAAAKLRRAQEAAEMARPYAEKMEAVMSGLASAVGNSEGAPRLLAGNGKDQVHLLVVMTAERGLCGGFNSTIVRKARVHAQKLLGEGKTIKILTVGKKGREQLRRDYADHLIGHVDLSDVKRLGYADAASIATDVLNRFEEDEFDVATIFFNRFESVISQIPTATQIIPAVFEDVEEADDTSKDSGTLYEYEPSEEAVLEDLLPRGIATQIFTALLENGASEQGARMSAMDNATRNAGDMIDRLTIEYNRSRQAVITSELIEIISGAEAL</sequence>
<feature type="chain" id="PRO_1000053231" description="ATP synthase gamma chain">
    <location>
        <begin position="1"/>
        <end position="296"/>
    </location>
</feature>
<accession>Q28TJ7</accession>
<reference key="1">
    <citation type="submission" date="2006-02" db="EMBL/GenBank/DDBJ databases">
        <title>Complete sequence of chromosome of Jannaschia sp. CCS1.</title>
        <authorList>
            <consortium name="US DOE Joint Genome Institute"/>
            <person name="Copeland A."/>
            <person name="Lucas S."/>
            <person name="Lapidus A."/>
            <person name="Barry K."/>
            <person name="Detter J.C."/>
            <person name="Glavina del Rio T."/>
            <person name="Hammon N."/>
            <person name="Israni S."/>
            <person name="Pitluck S."/>
            <person name="Brettin T."/>
            <person name="Bruce D."/>
            <person name="Han C."/>
            <person name="Tapia R."/>
            <person name="Gilna P."/>
            <person name="Chertkov O."/>
            <person name="Saunders E."/>
            <person name="Schmutz J."/>
            <person name="Larimer F."/>
            <person name="Land M."/>
            <person name="Kyrpides N."/>
            <person name="Lykidis A."/>
            <person name="Moran M.A."/>
            <person name="Belas R."/>
            <person name="Ye W."/>
            <person name="Buchan A."/>
            <person name="Gonzalez J.M."/>
            <person name="Schell M.A."/>
            <person name="Richardson P."/>
        </authorList>
    </citation>
    <scope>NUCLEOTIDE SEQUENCE [LARGE SCALE GENOMIC DNA]</scope>
    <source>
        <strain>CCS1</strain>
    </source>
</reference>
<organism>
    <name type="scientific">Jannaschia sp. (strain CCS1)</name>
    <dbReference type="NCBI Taxonomy" id="290400"/>
    <lineage>
        <taxon>Bacteria</taxon>
        <taxon>Pseudomonadati</taxon>
        <taxon>Pseudomonadota</taxon>
        <taxon>Alphaproteobacteria</taxon>
        <taxon>Rhodobacterales</taxon>
        <taxon>Roseobacteraceae</taxon>
        <taxon>Jannaschia</taxon>
    </lineage>
</organism>
<gene>
    <name evidence="1" type="primary">atpG</name>
    <name type="ordered locus">Jann_1048</name>
</gene>
<keyword id="KW-0066">ATP synthesis</keyword>
<keyword id="KW-0997">Cell inner membrane</keyword>
<keyword id="KW-1003">Cell membrane</keyword>
<keyword id="KW-0139">CF(1)</keyword>
<keyword id="KW-0375">Hydrogen ion transport</keyword>
<keyword id="KW-0406">Ion transport</keyword>
<keyword id="KW-0472">Membrane</keyword>
<keyword id="KW-1185">Reference proteome</keyword>
<keyword id="KW-0813">Transport</keyword>
<evidence type="ECO:0000255" key="1">
    <source>
        <dbReference type="HAMAP-Rule" id="MF_00815"/>
    </source>
</evidence>
<dbReference type="EMBL" id="CP000264">
    <property type="protein sequence ID" value="ABD53965.1"/>
    <property type="molecule type" value="Genomic_DNA"/>
</dbReference>
<dbReference type="RefSeq" id="WP_011454172.1">
    <property type="nucleotide sequence ID" value="NC_007802.1"/>
</dbReference>
<dbReference type="SMR" id="Q28TJ7"/>
<dbReference type="STRING" id="290400.Jann_1048"/>
<dbReference type="KEGG" id="jan:Jann_1048"/>
<dbReference type="eggNOG" id="COG0224">
    <property type="taxonomic scope" value="Bacteria"/>
</dbReference>
<dbReference type="HOGENOM" id="CLU_050669_0_1_5"/>
<dbReference type="OrthoDB" id="9812769at2"/>
<dbReference type="Proteomes" id="UP000008326">
    <property type="component" value="Chromosome"/>
</dbReference>
<dbReference type="GO" id="GO:0005886">
    <property type="term" value="C:plasma membrane"/>
    <property type="evidence" value="ECO:0007669"/>
    <property type="project" value="UniProtKB-SubCell"/>
</dbReference>
<dbReference type="GO" id="GO:0045259">
    <property type="term" value="C:proton-transporting ATP synthase complex"/>
    <property type="evidence" value="ECO:0007669"/>
    <property type="project" value="UniProtKB-KW"/>
</dbReference>
<dbReference type="GO" id="GO:0005524">
    <property type="term" value="F:ATP binding"/>
    <property type="evidence" value="ECO:0007669"/>
    <property type="project" value="UniProtKB-UniRule"/>
</dbReference>
<dbReference type="GO" id="GO:0046933">
    <property type="term" value="F:proton-transporting ATP synthase activity, rotational mechanism"/>
    <property type="evidence" value="ECO:0007669"/>
    <property type="project" value="UniProtKB-UniRule"/>
</dbReference>
<dbReference type="GO" id="GO:0042777">
    <property type="term" value="P:proton motive force-driven plasma membrane ATP synthesis"/>
    <property type="evidence" value="ECO:0007669"/>
    <property type="project" value="UniProtKB-UniRule"/>
</dbReference>
<dbReference type="CDD" id="cd12151">
    <property type="entry name" value="F1-ATPase_gamma"/>
    <property type="match status" value="1"/>
</dbReference>
<dbReference type="FunFam" id="1.10.287.80:FF:000001">
    <property type="entry name" value="ATP synthase gamma chain"/>
    <property type="match status" value="1"/>
</dbReference>
<dbReference type="Gene3D" id="3.40.1380.10">
    <property type="match status" value="1"/>
</dbReference>
<dbReference type="Gene3D" id="1.10.287.80">
    <property type="entry name" value="ATP synthase, gamma subunit, helix hairpin domain"/>
    <property type="match status" value="1"/>
</dbReference>
<dbReference type="HAMAP" id="MF_00815">
    <property type="entry name" value="ATP_synth_gamma_bact"/>
    <property type="match status" value="1"/>
</dbReference>
<dbReference type="InterPro" id="IPR035968">
    <property type="entry name" value="ATP_synth_F1_ATPase_gsu"/>
</dbReference>
<dbReference type="InterPro" id="IPR000131">
    <property type="entry name" value="ATP_synth_F1_gsu"/>
</dbReference>
<dbReference type="InterPro" id="IPR023632">
    <property type="entry name" value="ATP_synth_F1_gsu_CS"/>
</dbReference>
<dbReference type="NCBIfam" id="TIGR01146">
    <property type="entry name" value="ATPsyn_F1gamma"/>
    <property type="match status" value="1"/>
</dbReference>
<dbReference type="NCBIfam" id="NF004146">
    <property type="entry name" value="PRK05621.1-4"/>
    <property type="match status" value="1"/>
</dbReference>
<dbReference type="PANTHER" id="PTHR11693">
    <property type="entry name" value="ATP SYNTHASE GAMMA CHAIN"/>
    <property type="match status" value="1"/>
</dbReference>
<dbReference type="PANTHER" id="PTHR11693:SF22">
    <property type="entry name" value="ATP SYNTHASE SUBUNIT GAMMA, MITOCHONDRIAL"/>
    <property type="match status" value="1"/>
</dbReference>
<dbReference type="Pfam" id="PF00231">
    <property type="entry name" value="ATP-synt"/>
    <property type="match status" value="1"/>
</dbReference>
<dbReference type="PIRSF" id="PIRSF039089">
    <property type="entry name" value="ATP_synthase_gamma"/>
    <property type="match status" value="1"/>
</dbReference>
<dbReference type="PRINTS" id="PR00126">
    <property type="entry name" value="ATPASEGAMMA"/>
</dbReference>
<dbReference type="SUPFAM" id="SSF52943">
    <property type="entry name" value="ATP synthase (F1-ATPase), gamma subunit"/>
    <property type="match status" value="1"/>
</dbReference>
<dbReference type="PROSITE" id="PS00153">
    <property type="entry name" value="ATPASE_GAMMA"/>
    <property type="match status" value="1"/>
</dbReference>